<protein>
    <recommendedName>
        <fullName evidence="1">Redox-sensing transcriptional repressor Rex</fullName>
    </recommendedName>
</protein>
<evidence type="ECO:0000255" key="1">
    <source>
        <dbReference type="HAMAP-Rule" id="MF_01131"/>
    </source>
</evidence>
<feature type="chain" id="PRO_0000097903" description="Redox-sensing transcriptional repressor Rex">
    <location>
        <begin position="1"/>
        <end position="211"/>
    </location>
</feature>
<feature type="DNA-binding region" description="H-T-H motif" evidence="1">
    <location>
        <begin position="17"/>
        <end position="56"/>
    </location>
</feature>
<feature type="binding site" evidence="1">
    <location>
        <begin position="91"/>
        <end position="96"/>
    </location>
    <ligand>
        <name>NAD(+)</name>
        <dbReference type="ChEBI" id="CHEBI:57540"/>
    </ligand>
</feature>
<comment type="function">
    <text evidence="1">Modulates transcription in response to changes in cellular NADH/NAD(+) redox state.</text>
</comment>
<comment type="subunit">
    <text evidence="1">Homodimer.</text>
</comment>
<comment type="subcellular location">
    <subcellularLocation>
        <location evidence="1">Cytoplasm</location>
    </subcellularLocation>
</comment>
<comment type="similarity">
    <text evidence="1">Belongs to the transcriptional regulatory Rex family.</text>
</comment>
<keyword id="KW-0963">Cytoplasm</keyword>
<keyword id="KW-0238">DNA-binding</keyword>
<keyword id="KW-0520">NAD</keyword>
<keyword id="KW-0678">Repressor</keyword>
<keyword id="KW-0804">Transcription</keyword>
<keyword id="KW-0805">Transcription regulation</keyword>
<accession>Q5HEF5</accession>
<name>REX_STAAC</name>
<reference key="1">
    <citation type="journal article" date="2005" name="J. Bacteriol.">
        <title>Insights on evolution of virulence and resistance from the complete genome analysis of an early methicillin-resistant Staphylococcus aureus strain and a biofilm-producing methicillin-resistant Staphylococcus epidermidis strain.</title>
        <authorList>
            <person name="Gill S.R."/>
            <person name="Fouts D.E."/>
            <person name="Archer G.L."/>
            <person name="Mongodin E.F."/>
            <person name="DeBoy R.T."/>
            <person name="Ravel J."/>
            <person name="Paulsen I.T."/>
            <person name="Kolonay J.F."/>
            <person name="Brinkac L.M."/>
            <person name="Beanan M.J."/>
            <person name="Dodson R.J."/>
            <person name="Daugherty S.C."/>
            <person name="Madupu R."/>
            <person name="Angiuoli S.V."/>
            <person name="Durkin A.S."/>
            <person name="Haft D.H."/>
            <person name="Vamathevan J.J."/>
            <person name="Khouri H."/>
            <person name="Utterback T.R."/>
            <person name="Lee C."/>
            <person name="Dimitrov G."/>
            <person name="Jiang L."/>
            <person name="Qin H."/>
            <person name="Weidman J."/>
            <person name="Tran K."/>
            <person name="Kang K.H."/>
            <person name="Hance I.R."/>
            <person name="Nelson K.E."/>
            <person name="Fraser C.M."/>
        </authorList>
    </citation>
    <scope>NUCLEOTIDE SEQUENCE [LARGE SCALE GENOMIC DNA]</scope>
    <source>
        <strain>COL</strain>
    </source>
</reference>
<sequence>MSDQVKIPRATLKRLPLYYRFVSSLKSKGIDRVNSKAISDALQIDSATIRRDFSYFGELGKKGYGYNIDSLLDFFKSELSESDMIKIAIVGVGNLGKALLTYNFSIHDDMTITEAFDVKEDVIGQKIGNVIVKDNDELITTLKKEEIDVVILTTPERVAQKVADELVQAGVKGILNFTPGRINTPSDVQVHQIDLGIELQSLLFFMKNYSE</sequence>
<gene>
    <name evidence="1" type="primary">rex</name>
    <name type="ordered locus">SACOL2035</name>
</gene>
<organism>
    <name type="scientific">Staphylococcus aureus (strain COL)</name>
    <dbReference type="NCBI Taxonomy" id="93062"/>
    <lineage>
        <taxon>Bacteria</taxon>
        <taxon>Bacillati</taxon>
        <taxon>Bacillota</taxon>
        <taxon>Bacilli</taxon>
        <taxon>Bacillales</taxon>
        <taxon>Staphylococcaceae</taxon>
        <taxon>Staphylococcus</taxon>
    </lineage>
</organism>
<dbReference type="EMBL" id="CP000046">
    <property type="protein sequence ID" value="AAW36998.1"/>
    <property type="molecule type" value="Genomic_DNA"/>
</dbReference>
<dbReference type="RefSeq" id="WP_001283612.1">
    <property type="nucleotide sequence ID" value="NZ_JBGOFO010000006.1"/>
</dbReference>
<dbReference type="SMR" id="Q5HEF5"/>
<dbReference type="KEGG" id="sac:SACOL2035"/>
<dbReference type="HOGENOM" id="CLU_061534_1_1_9"/>
<dbReference type="Proteomes" id="UP000000530">
    <property type="component" value="Chromosome"/>
</dbReference>
<dbReference type="GO" id="GO:0005737">
    <property type="term" value="C:cytoplasm"/>
    <property type="evidence" value="ECO:0007669"/>
    <property type="project" value="UniProtKB-SubCell"/>
</dbReference>
<dbReference type="GO" id="GO:0003677">
    <property type="term" value="F:DNA binding"/>
    <property type="evidence" value="ECO:0007669"/>
    <property type="project" value="UniProtKB-UniRule"/>
</dbReference>
<dbReference type="GO" id="GO:0003700">
    <property type="term" value="F:DNA-binding transcription factor activity"/>
    <property type="evidence" value="ECO:0007669"/>
    <property type="project" value="UniProtKB-UniRule"/>
</dbReference>
<dbReference type="GO" id="GO:0045892">
    <property type="term" value="P:negative regulation of DNA-templated transcription"/>
    <property type="evidence" value="ECO:0007669"/>
    <property type="project" value="InterPro"/>
</dbReference>
<dbReference type="GO" id="GO:0051775">
    <property type="term" value="P:response to redox state"/>
    <property type="evidence" value="ECO:0007669"/>
    <property type="project" value="InterPro"/>
</dbReference>
<dbReference type="Gene3D" id="3.40.50.720">
    <property type="entry name" value="NAD(P)-binding Rossmann-like Domain"/>
    <property type="match status" value="1"/>
</dbReference>
<dbReference type="Gene3D" id="1.10.10.10">
    <property type="entry name" value="Winged helix-like DNA-binding domain superfamily/Winged helix DNA-binding domain"/>
    <property type="match status" value="1"/>
</dbReference>
<dbReference type="HAMAP" id="MF_01131">
    <property type="entry name" value="Rex"/>
    <property type="match status" value="1"/>
</dbReference>
<dbReference type="InterPro" id="IPR003781">
    <property type="entry name" value="CoA-bd"/>
</dbReference>
<dbReference type="InterPro" id="IPR036291">
    <property type="entry name" value="NAD(P)-bd_dom_sf"/>
</dbReference>
<dbReference type="InterPro" id="IPR009718">
    <property type="entry name" value="Rex_DNA-bd_C_dom"/>
</dbReference>
<dbReference type="InterPro" id="IPR022876">
    <property type="entry name" value="Tscrpt_rep_Rex"/>
</dbReference>
<dbReference type="InterPro" id="IPR036388">
    <property type="entry name" value="WH-like_DNA-bd_sf"/>
</dbReference>
<dbReference type="InterPro" id="IPR036390">
    <property type="entry name" value="WH_DNA-bd_sf"/>
</dbReference>
<dbReference type="NCBIfam" id="NF003989">
    <property type="entry name" value="PRK05472.1-3"/>
    <property type="match status" value="1"/>
</dbReference>
<dbReference type="NCBIfam" id="NF003991">
    <property type="entry name" value="PRK05472.1-5"/>
    <property type="match status" value="1"/>
</dbReference>
<dbReference type="NCBIfam" id="NF003994">
    <property type="entry name" value="PRK05472.2-3"/>
    <property type="match status" value="1"/>
</dbReference>
<dbReference type="NCBIfam" id="NF003995">
    <property type="entry name" value="PRK05472.2-4"/>
    <property type="match status" value="1"/>
</dbReference>
<dbReference type="NCBIfam" id="NF003996">
    <property type="entry name" value="PRK05472.2-5"/>
    <property type="match status" value="1"/>
</dbReference>
<dbReference type="PANTHER" id="PTHR35786">
    <property type="entry name" value="REDOX-SENSING TRANSCRIPTIONAL REPRESSOR REX"/>
    <property type="match status" value="1"/>
</dbReference>
<dbReference type="PANTHER" id="PTHR35786:SF1">
    <property type="entry name" value="REDOX-SENSING TRANSCRIPTIONAL REPRESSOR REX 1"/>
    <property type="match status" value="1"/>
</dbReference>
<dbReference type="Pfam" id="PF02629">
    <property type="entry name" value="CoA_binding"/>
    <property type="match status" value="1"/>
</dbReference>
<dbReference type="Pfam" id="PF06971">
    <property type="entry name" value="Put_DNA-bind_N"/>
    <property type="match status" value="1"/>
</dbReference>
<dbReference type="SMART" id="SM00881">
    <property type="entry name" value="CoA_binding"/>
    <property type="match status" value="1"/>
</dbReference>
<dbReference type="SUPFAM" id="SSF51735">
    <property type="entry name" value="NAD(P)-binding Rossmann-fold domains"/>
    <property type="match status" value="1"/>
</dbReference>
<dbReference type="SUPFAM" id="SSF46785">
    <property type="entry name" value="Winged helix' DNA-binding domain"/>
    <property type="match status" value="1"/>
</dbReference>
<proteinExistence type="inferred from homology"/>